<reference key="1">
    <citation type="journal article" date="2009" name="Environ. Microbiol.">
        <title>The genome of Polaromonas naphthalenivorans strain CJ2, isolated from coal tar-contaminated sediment, reveals physiological and metabolic versatility and evolution through extensive horizontal gene transfer.</title>
        <authorList>
            <person name="Yagi J.M."/>
            <person name="Sims D."/>
            <person name="Brettin T."/>
            <person name="Bruce D."/>
            <person name="Madsen E.L."/>
        </authorList>
    </citation>
    <scope>NUCLEOTIDE SEQUENCE [LARGE SCALE GENOMIC DNA]</scope>
    <source>
        <strain>CJ2</strain>
    </source>
</reference>
<name>TRMB_POLNA</name>
<proteinExistence type="inferred from homology"/>
<sequence length="246" mass="26899">MIESSSPTPPALHEGAPADVSHPRNIRSFVRRTGRTTVGQAKAFADVGPRFLLAYSGLPMDFSAVYGRDAPTILEIGFGMGEATAHIAGLMPEKNFLCCEVHTPGVGALLKRIDEQALTNIRILQHDAVEVIDHMLPLGSLDGAHIFFPDPWHKTKHNKRRLIQAPLIAKLAARLKPGGYLHCATDWQPYAEQILEVLSAEPLLKNTADAASDGYAPKPGYRPLTKFENRGIKLGHGVWDVVFTRA</sequence>
<gene>
    <name evidence="2" type="primary">trmB</name>
    <name type="ordered locus">Pnap_2936</name>
</gene>
<evidence type="ECO:0000250" key="1"/>
<evidence type="ECO:0000255" key="2">
    <source>
        <dbReference type="HAMAP-Rule" id="MF_01057"/>
    </source>
</evidence>
<evidence type="ECO:0000256" key="3">
    <source>
        <dbReference type="SAM" id="MobiDB-lite"/>
    </source>
</evidence>
<organism>
    <name type="scientific">Polaromonas naphthalenivorans (strain CJ2)</name>
    <dbReference type="NCBI Taxonomy" id="365044"/>
    <lineage>
        <taxon>Bacteria</taxon>
        <taxon>Pseudomonadati</taxon>
        <taxon>Pseudomonadota</taxon>
        <taxon>Betaproteobacteria</taxon>
        <taxon>Burkholderiales</taxon>
        <taxon>Comamonadaceae</taxon>
        <taxon>Polaromonas</taxon>
    </lineage>
</organism>
<feature type="chain" id="PRO_0000288196" description="tRNA (guanine-N(7)-)-methyltransferase">
    <location>
        <begin position="1"/>
        <end position="246"/>
    </location>
</feature>
<feature type="region of interest" description="Disordered" evidence="3">
    <location>
        <begin position="1"/>
        <end position="23"/>
    </location>
</feature>
<feature type="region of interest" description="Interaction with RNA" evidence="2">
    <location>
        <begin position="156"/>
        <end position="161"/>
    </location>
</feature>
<feature type="active site" evidence="1">
    <location>
        <position position="150"/>
    </location>
</feature>
<feature type="binding site" evidence="2">
    <location>
        <position position="75"/>
    </location>
    <ligand>
        <name>S-adenosyl-L-methionine</name>
        <dbReference type="ChEBI" id="CHEBI:59789"/>
    </ligand>
</feature>
<feature type="binding site" evidence="2">
    <location>
        <position position="100"/>
    </location>
    <ligand>
        <name>S-adenosyl-L-methionine</name>
        <dbReference type="ChEBI" id="CHEBI:59789"/>
    </ligand>
</feature>
<feature type="binding site" evidence="2">
    <location>
        <position position="127"/>
    </location>
    <ligand>
        <name>S-adenosyl-L-methionine</name>
        <dbReference type="ChEBI" id="CHEBI:59789"/>
    </ligand>
</feature>
<feature type="binding site" evidence="2">
    <location>
        <position position="150"/>
    </location>
    <ligand>
        <name>S-adenosyl-L-methionine</name>
        <dbReference type="ChEBI" id="CHEBI:59789"/>
    </ligand>
</feature>
<feature type="binding site" evidence="2">
    <location>
        <position position="154"/>
    </location>
    <ligand>
        <name>substrate</name>
    </ligand>
</feature>
<feature type="binding site" evidence="2">
    <location>
        <position position="186"/>
    </location>
    <ligand>
        <name>substrate</name>
    </ligand>
</feature>
<feature type="binding site" evidence="2">
    <location>
        <begin position="225"/>
        <end position="228"/>
    </location>
    <ligand>
        <name>substrate</name>
    </ligand>
</feature>
<accession>A1VRF7</accession>
<protein>
    <recommendedName>
        <fullName evidence="2">tRNA (guanine-N(7)-)-methyltransferase</fullName>
        <ecNumber evidence="2">2.1.1.33</ecNumber>
    </recommendedName>
    <alternativeName>
        <fullName evidence="2">tRNA (guanine(46)-N(7))-methyltransferase</fullName>
    </alternativeName>
    <alternativeName>
        <fullName evidence="2">tRNA(m7G46)-methyltransferase</fullName>
    </alternativeName>
</protein>
<keyword id="KW-0489">Methyltransferase</keyword>
<keyword id="KW-1185">Reference proteome</keyword>
<keyword id="KW-0949">S-adenosyl-L-methionine</keyword>
<keyword id="KW-0808">Transferase</keyword>
<keyword id="KW-0819">tRNA processing</keyword>
<dbReference type="EC" id="2.1.1.33" evidence="2"/>
<dbReference type="EMBL" id="CP000529">
    <property type="protein sequence ID" value="ABM38235.1"/>
    <property type="molecule type" value="Genomic_DNA"/>
</dbReference>
<dbReference type="RefSeq" id="WP_011802309.1">
    <property type="nucleotide sequence ID" value="NC_008781.1"/>
</dbReference>
<dbReference type="SMR" id="A1VRF7"/>
<dbReference type="STRING" id="365044.Pnap_2936"/>
<dbReference type="KEGG" id="pna:Pnap_2936"/>
<dbReference type="eggNOG" id="COG0220">
    <property type="taxonomic scope" value="Bacteria"/>
</dbReference>
<dbReference type="HOGENOM" id="CLU_050910_0_1_4"/>
<dbReference type="OrthoDB" id="9802090at2"/>
<dbReference type="UniPathway" id="UPA00989"/>
<dbReference type="Proteomes" id="UP000000644">
    <property type="component" value="Chromosome"/>
</dbReference>
<dbReference type="GO" id="GO:0043527">
    <property type="term" value="C:tRNA methyltransferase complex"/>
    <property type="evidence" value="ECO:0007669"/>
    <property type="project" value="TreeGrafter"/>
</dbReference>
<dbReference type="GO" id="GO:0008176">
    <property type="term" value="F:tRNA (guanine(46)-N7)-methyltransferase activity"/>
    <property type="evidence" value="ECO:0007669"/>
    <property type="project" value="UniProtKB-UniRule"/>
</dbReference>
<dbReference type="CDD" id="cd02440">
    <property type="entry name" value="AdoMet_MTases"/>
    <property type="match status" value="1"/>
</dbReference>
<dbReference type="Gene3D" id="3.40.50.150">
    <property type="entry name" value="Vaccinia Virus protein VP39"/>
    <property type="match status" value="1"/>
</dbReference>
<dbReference type="HAMAP" id="MF_01057">
    <property type="entry name" value="tRNA_methyltr_TrmB"/>
    <property type="match status" value="1"/>
</dbReference>
<dbReference type="InterPro" id="IPR029063">
    <property type="entry name" value="SAM-dependent_MTases_sf"/>
</dbReference>
<dbReference type="InterPro" id="IPR003358">
    <property type="entry name" value="tRNA_(Gua-N-7)_MeTrfase_Trmb"/>
</dbReference>
<dbReference type="InterPro" id="IPR055361">
    <property type="entry name" value="tRNA_methyltr_TrmB_bact"/>
</dbReference>
<dbReference type="NCBIfam" id="TIGR00091">
    <property type="entry name" value="tRNA (guanosine(46)-N7)-methyltransferase TrmB"/>
    <property type="match status" value="1"/>
</dbReference>
<dbReference type="PANTHER" id="PTHR23417">
    <property type="entry name" value="3-DEOXY-D-MANNO-OCTULOSONIC-ACID TRANSFERASE/TRNA GUANINE-N 7 - -METHYLTRANSFERASE"/>
    <property type="match status" value="1"/>
</dbReference>
<dbReference type="PANTHER" id="PTHR23417:SF14">
    <property type="entry name" value="PENTACOTRIPEPTIDE-REPEAT REGION OF PRORP DOMAIN-CONTAINING PROTEIN"/>
    <property type="match status" value="1"/>
</dbReference>
<dbReference type="Pfam" id="PF02390">
    <property type="entry name" value="Methyltransf_4"/>
    <property type="match status" value="1"/>
</dbReference>
<dbReference type="SUPFAM" id="SSF53335">
    <property type="entry name" value="S-adenosyl-L-methionine-dependent methyltransferases"/>
    <property type="match status" value="1"/>
</dbReference>
<dbReference type="PROSITE" id="PS51625">
    <property type="entry name" value="SAM_MT_TRMB"/>
    <property type="match status" value="1"/>
</dbReference>
<comment type="function">
    <text evidence="2">Catalyzes the formation of N(7)-methylguanine at position 46 (m7G46) in tRNA.</text>
</comment>
<comment type="catalytic activity">
    <reaction evidence="2">
        <text>guanosine(46) in tRNA + S-adenosyl-L-methionine = N(7)-methylguanosine(46) in tRNA + S-adenosyl-L-homocysteine</text>
        <dbReference type="Rhea" id="RHEA:42708"/>
        <dbReference type="Rhea" id="RHEA-COMP:10188"/>
        <dbReference type="Rhea" id="RHEA-COMP:10189"/>
        <dbReference type="ChEBI" id="CHEBI:57856"/>
        <dbReference type="ChEBI" id="CHEBI:59789"/>
        <dbReference type="ChEBI" id="CHEBI:74269"/>
        <dbReference type="ChEBI" id="CHEBI:74480"/>
        <dbReference type="EC" id="2.1.1.33"/>
    </reaction>
</comment>
<comment type="pathway">
    <text evidence="2">tRNA modification; N(7)-methylguanine-tRNA biosynthesis.</text>
</comment>
<comment type="similarity">
    <text evidence="2">Belongs to the class I-like SAM-binding methyltransferase superfamily. TrmB family.</text>
</comment>